<organism>
    <name type="scientific">Brachypodium distachyon</name>
    <name type="common">Purple false brome</name>
    <name type="synonym">Trachynia distachya</name>
    <dbReference type="NCBI Taxonomy" id="15368"/>
    <lineage>
        <taxon>Eukaryota</taxon>
        <taxon>Viridiplantae</taxon>
        <taxon>Streptophyta</taxon>
        <taxon>Embryophyta</taxon>
        <taxon>Tracheophyta</taxon>
        <taxon>Spermatophyta</taxon>
        <taxon>Magnoliopsida</taxon>
        <taxon>Liliopsida</taxon>
        <taxon>Poales</taxon>
        <taxon>Poaceae</taxon>
        <taxon>BOP clade</taxon>
        <taxon>Pooideae</taxon>
        <taxon>Stipodae</taxon>
        <taxon>Brachypodieae</taxon>
        <taxon>Brachypodium</taxon>
    </lineage>
</organism>
<feature type="chain" id="PRO_0000458554" description="Protein FLOWERING LOCUS T 1">
    <location>
        <begin position="1"/>
        <end position="178"/>
    </location>
</feature>
<name>FTL1_BRADI</name>
<proteinExistence type="evidence at transcript level"/>
<dbReference type="EMBL" id="KF572023">
    <property type="protein sequence ID" value="AHB63017.1"/>
    <property type="molecule type" value="mRNA"/>
</dbReference>
<dbReference type="EMBL" id="CM000881">
    <property type="protein sequence ID" value="KQK03315.1"/>
    <property type="molecule type" value="Genomic_DNA"/>
</dbReference>
<dbReference type="RefSeq" id="XP_003565602.1">
    <property type="nucleotide sequence ID" value="XM_003565554.3"/>
</dbReference>
<dbReference type="SMR" id="A0A0Q3IBS1"/>
<dbReference type="FunCoup" id="A0A0Q3IBS1">
    <property type="interactions" value="836"/>
</dbReference>
<dbReference type="STRING" id="15368.A0A0Q3IBS1"/>
<dbReference type="EnsemblPlants" id="KQK03315">
    <property type="protein sequence ID" value="KQK03315"/>
    <property type="gene ID" value="BRADI_2g07070v3"/>
</dbReference>
<dbReference type="GeneID" id="100838275"/>
<dbReference type="Gramene" id="KQK03315">
    <property type="protein sequence ID" value="KQK03315"/>
    <property type="gene ID" value="BRADI_2g07070v3"/>
</dbReference>
<dbReference type="KEGG" id="bdi:100838275"/>
<dbReference type="eggNOG" id="KOG3346">
    <property type="taxonomic scope" value="Eukaryota"/>
</dbReference>
<dbReference type="HOGENOM" id="CLU_043994_6_1_1"/>
<dbReference type="OrthoDB" id="2506647at2759"/>
<dbReference type="Proteomes" id="UP000008810">
    <property type="component" value="Chromosome 2"/>
</dbReference>
<dbReference type="ExpressionAtlas" id="A0A0Q3IBS1">
    <property type="expression patterns" value="baseline"/>
</dbReference>
<dbReference type="GO" id="GO:2000028">
    <property type="term" value="P:regulation of photoperiodism, flowering"/>
    <property type="evidence" value="ECO:0000315"/>
    <property type="project" value="UniProtKB"/>
</dbReference>
<dbReference type="CDD" id="cd00866">
    <property type="entry name" value="PEBP_euk"/>
    <property type="match status" value="1"/>
</dbReference>
<dbReference type="FunFam" id="3.90.280.10:FF:000001">
    <property type="entry name" value="Terminal flower 1"/>
    <property type="match status" value="1"/>
</dbReference>
<dbReference type="Gene3D" id="3.90.280.10">
    <property type="entry name" value="PEBP-like"/>
    <property type="match status" value="1"/>
</dbReference>
<dbReference type="InterPro" id="IPR008914">
    <property type="entry name" value="PEBP"/>
</dbReference>
<dbReference type="InterPro" id="IPR036610">
    <property type="entry name" value="PEBP-like_sf"/>
</dbReference>
<dbReference type="InterPro" id="IPR035810">
    <property type="entry name" value="PEBP_euk"/>
</dbReference>
<dbReference type="InterPro" id="IPR001858">
    <property type="entry name" value="Phosphatidylethanolamine-bd_CS"/>
</dbReference>
<dbReference type="PANTHER" id="PTHR11362">
    <property type="entry name" value="PHOSPHATIDYLETHANOLAMINE-BINDING PROTEIN"/>
    <property type="match status" value="1"/>
</dbReference>
<dbReference type="PANTHER" id="PTHR11362:SF113">
    <property type="entry name" value="PROTEIN FLOWERING LOCUS T 1"/>
    <property type="match status" value="1"/>
</dbReference>
<dbReference type="Pfam" id="PF01161">
    <property type="entry name" value="PBP"/>
    <property type="match status" value="1"/>
</dbReference>
<dbReference type="SUPFAM" id="SSF49777">
    <property type="entry name" value="PEBP-like"/>
    <property type="match status" value="1"/>
</dbReference>
<dbReference type="PROSITE" id="PS01220">
    <property type="entry name" value="PBP"/>
    <property type="match status" value="1"/>
</dbReference>
<reference key="1">
    <citation type="journal article" date="2013" name="Plant Cell">
        <title>Regulation of FLOWERING LOCUS T by a microRNA in Brachypodium distachyon.</title>
        <authorList>
            <person name="Wu L."/>
            <person name="Liu D."/>
            <person name="Wu J."/>
            <person name="Zhang R."/>
            <person name="Qin Z."/>
            <person name="Liu D."/>
            <person name="Li A."/>
            <person name="Fu D."/>
            <person name="Zhai W."/>
            <person name="Mao L."/>
        </authorList>
    </citation>
    <scope>NUCLEOTIDE SEQUENCE [MRNA] OF 6-178</scope>
    <scope>FUNCTION</scope>
    <scope>TISSUE SPECIFICITY</scope>
    <scope>INDUCTION</scope>
    <source>
        <strain>cv. Bd21</strain>
    </source>
</reference>
<reference key="2">
    <citation type="journal article" date="2010" name="Nature">
        <title>Genome sequencing and analysis of the model grass Brachypodium distachyon.</title>
        <authorList>
            <consortium name="International Brachypodium Initiative"/>
        </authorList>
    </citation>
    <scope>NUCLEOTIDE SEQUENCE [LARGE SCALE GENOMIC DNA]</scope>
    <source>
        <strain>cv. Bd21</strain>
    </source>
</reference>
<reference key="3">
    <citation type="submission" date="2017-06" db="EMBL/GenBank/DDBJ databases">
        <title>WGS assembly of Brachypodium distachyon.</title>
        <authorList>
            <consortium name="The International Brachypodium Initiative"/>
            <person name="Lucas S."/>
            <person name="Harmon-Smith M."/>
            <person name="Lail K."/>
            <person name="Tice H."/>
            <person name="Grimwood J."/>
            <person name="Bruce D."/>
            <person name="Barry K."/>
            <person name="Shu S."/>
            <person name="Lindquist E."/>
            <person name="Wang M."/>
            <person name="Pitluck S."/>
            <person name="Vogel J.P."/>
            <person name="Garvin D.F."/>
            <person name="Mockler T.C."/>
            <person name="Schmutz J."/>
            <person name="Rokhsar D."/>
            <person name="Bevan M.W."/>
        </authorList>
    </citation>
    <scope>GENOME REANNOTATION</scope>
    <source>
        <strain>cv. Bd21</strain>
    </source>
</reference>
<comment type="function">
    <text evidence="1">Involved in the regulation of vernalization and of flowering time.</text>
</comment>
<comment type="tissue specificity">
    <text evidence="1">Expressed in leaves but not in shoot apex.</text>
</comment>
<comment type="induction">
    <text evidence="1">Follows a circadian rhythm expression with a maximum transient peak four hours before dawn in long-day (LD) conditions, but barely expressed in short-day (SD) conditions (PubMed:24285787). Targeted for mRNA cleavage by Pooideae-specific microRNAs miR5200a and miR5200b in leaves in short days, but not in long days (PubMed:24285787).</text>
</comment>
<comment type="similarity">
    <text evidence="3">Belongs to the phosphatidylethanolamine-binding protein family.</text>
</comment>
<accession>A0A0Q3IBS1</accession>
<accession>I1HDB0</accession>
<keyword id="KW-1185">Reference proteome</keyword>
<evidence type="ECO:0000269" key="1">
    <source>
    </source>
</evidence>
<evidence type="ECO:0000303" key="2">
    <source>
    </source>
</evidence>
<evidence type="ECO:0000305" key="3"/>
<evidence type="ECO:0000312" key="4">
    <source>
        <dbReference type="EMBL" id="KQK03315.1"/>
    </source>
</evidence>
<sequence length="178" mass="19587">MVGGGMPRGDPLVVGRVIGDVVDPFVRRVSLRVGYASRDVANGCELRPSAIADPPRVEVGGPDMRTFYTLVMVDPDAPSPSDPSLREYLHWLVTDIPATTGVSFGTEVVCYESPRPVLGIHRLVFLLFQQLGRQTVYAPGWRQNFSTRDFAELYNLGLPVAAVYFNCQRESGTGGRRM</sequence>
<gene>
    <name evidence="2" type="primary">FTL1</name>
    <name evidence="4" type="ORF">BRADI_2g07070v3</name>
</gene>
<protein>
    <recommendedName>
        <fullName evidence="2">Protein FLOWERING LOCUS T 1</fullName>
    </recommendedName>
</protein>